<evidence type="ECO:0000255" key="1">
    <source>
        <dbReference type="HAMAP-Rule" id="MF_00318"/>
    </source>
</evidence>
<name>ENO_ACIC1</name>
<reference key="1">
    <citation type="journal article" date="2009" name="Genome Res.">
        <title>Complete genome of the cellulolytic thermophile Acidothermus cellulolyticus 11B provides insights into its ecophysiological and evolutionary adaptations.</title>
        <authorList>
            <person name="Barabote R.D."/>
            <person name="Xie G."/>
            <person name="Leu D.H."/>
            <person name="Normand P."/>
            <person name="Necsulea A."/>
            <person name="Daubin V."/>
            <person name="Medigue C."/>
            <person name="Adney W.S."/>
            <person name="Xu X.C."/>
            <person name="Lapidus A."/>
            <person name="Parales R.E."/>
            <person name="Detter C."/>
            <person name="Pujic P."/>
            <person name="Bruce D."/>
            <person name="Lavire C."/>
            <person name="Challacombe J.F."/>
            <person name="Brettin T.S."/>
            <person name="Berry A.M."/>
        </authorList>
    </citation>
    <scope>NUCLEOTIDE SEQUENCE [LARGE SCALE GENOMIC DNA]</scope>
    <source>
        <strain>ATCC 43068 / DSM 8971 / 11B</strain>
    </source>
</reference>
<gene>
    <name evidence="1" type="primary">eno</name>
    <name type="ordered locus">Acel_1909</name>
</gene>
<protein>
    <recommendedName>
        <fullName evidence="1">Enolase</fullName>
        <ecNumber evidence="1">4.2.1.11</ecNumber>
    </recommendedName>
    <alternativeName>
        <fullName evidence="1">2-phospho-D-glycerate hydro-lyase</fullName>
    </alternativeName>
    <alternativeName>
        <fullName evidence="1">2-phosphoglycerate dehydratase</fullName>
    </alternativeName>
</protein>
<keyword id="KW-0963">Cytoplasm</keyword>
<keyword id="KW-0324">Glycolysis</keyword>
<keyword id="KW-0456">Lyase</keyword>
<keyword id="KW-0460">Magnesium</keyword>
<keyword id="KW-0479">Metal-binding</keyword>
<keyword id="KW-1185">Reference proteome</keyword>
<keyword id="KW-0964">Secreted</keyword>
<comment type="function">
    <text evidence="1">Catalyzes the reversible conversion of 2-phosphoglycerate (2-PG) into phosphoenolpyruvate (PEP). It is essential for the degradation of carbohydrates via glycolysis.</text>
</comment>
<comment type="catalytic activity">
    <reaction evidence="1">
        <text>(2R)-2-phosphoglycerate = phosphoenolpyruvate + H2O</text>
        <dbReference type="Rhea" id="RHEA:10164"/>
        <dbReference type="ChEBI" id="CHEBI:15377"/>
        <dbReference type="ChEBI" id="CHEBI:58289"/>
        <dbReference type="ChEBI" id="CHEBI:58702"/>
        <dbReference type="EC" id="4.2.1.11"/>
    </reaction>
</comment>
<comment type="cofactor">
    <cofactor evidence="1">
        <name>Mg(2+)</name>
        <dbReference type="ChEBI" id="CHEBI:18420"/>
    </cofactor>
    <text evidence="1">Binds a second Mg(2+) ion via substrate during catalysis.</text>
</comment>
<comment type="pathway">
    <text evidence="1">Carbohydrate degradation; glycolysis; pyruvate from D-glyceraldehyde 3-phosphate: step 4/5.</text>
</comment>
<comment type="subcellular location">
    <subcellularLocation>
        <location evidence="1">Cytoplasm</location>
    </subcellularLocation>
    <subcellularLocation>
        <location evidence="1">Secreted</location>
    </subcellularLocation>
    <subcellularLocation>
        <location evidence="1">Cell surface</location>
    </subcellularLocation>
    <text evidence="1">Fractions of enolase are present in both the cytoplasm and on the cell surface.</text>
</comment>
<comment type="similarity">
    <text evidence="1">Belongs to the enolase family.</text>
</comment>
<dbReference type="EC" id="4.2.1.11" evidence="1"/>
<dbReference type="EMBL" id="CP000481">
    <property type="protein sequence ID" value="ABK53681.1"/>
    <property type="molecule type" value="Genomic_DNA"/>
</dbReference>
<dbReference type="RefSeq" id="WP_011720744.1">
    <property type="nucleotide sequence ID" value="NC_008578.1"/>
</dbReference>
<dbReference type="SMR" id="A0LW71"/>
<dbReference type="FunCoup" id="A0LW71">
    <property type="interactions" value="332"/>
</dbReference>
<dbReference type="STRING" id="351607.Acel_1909"/>
<dbReference type="KEGG" id="ace:Acel_1909"/>
<dbReference type="eggNOG" id="COG0148">
    <property type="taxonomic scope" value="Bacteria"/>
</dbReference>
<dbReference type="HOGENOM" id="CLU_031223_2_1_11"/>
<dbReference type="InParanoid" id="A0LW71"/>
<dbReference type="OrthoDB" id="9804716at2"/>
<dbReference type="UniPathway" id="UPA00109">
    <property type="reaction ID" value="UER00187"/>
</dbReference>
<dbReference type="Proteomes" id="UP000008221">
    <property type="component" value="Chromosome"/>
</dbReference>
<dbReference type="GO" id="GO:0009986">
    <property type="term" value="C:cell surface"/>
    <property type="evidence" value="ECO:0007669"/>
    <property type="project" value="UniProtKB-SubCell"/>
</dbReference>
<dbReference type="GO" id="GO:0005576">
    <property type="term" value="C:extracellular region"/>
    <property type="evidence" value="ECO:0007669"/>
    <property type="project" value="UniProtKB-SubCell"/>
</dbReference>
<dbReference type="GO" id="GO:0000015">
    <property type="term" value="C:phosphopyruvate hydratase complex"/>
    <property type="evidence" value="ECO:0007669"/>
    <property type="project" value="InterPro"/>
</dbReference>
<dbReference type="GO" id="GO:0000287">
    <property type="term" value="F:magnesium ion binding"/>
    <property type="evidence" value="ECO:0007669"/>
    <property type="project" value="UniProtKB-UniRule"/>
</dbReference>
<dbReference type="GO" id="GO:0004634">
    <property type="term" value="F:phosphopyruvate hydratase activity"/>
    <property type="evidence" value="ECO:0007669"/>
    <property type="project" value="UniProtKB-UniRule"/>
</dbReference>
<dbReference type="GO" id="GO:0006096">
    <property type="term" value="P:glycolytic process"/>
    <property type="evidence" value="ECO:0007669"/>
    <property type="project" value="UniProtKB-UniRule"/>
</dbReference>
<dbReference type="CDD" id="cd03313">
    <property type="entry name" value="enolase"/>
    <property type="match status" value="1"/>
</dbReference>
<dbReference type="FunFam" id="3.20.20.120:FF:000001">
    <property type="entry name" value="Enolase"/>
    <property type="match status" value="1"/>
</dbReference>
<dbReference type="FunFam" id="3.30.390.10:FF:000001">
    <property type="entry name" value="Enolase"/>
    <property type="match status" value="1"/>
</dbReference>
<dbReference type="Gene3D" id="3.20.20.120">
    <property type="entry name" value="Enolase-like C-terminal domain"/>
    <property type="match status" value="1"/>
</dbReference>
<dbReference type="Gene3D" id="3.30.390.10">
    <property type="entry name" value="Enolase-like, N-terminal domain"/>
    <property type="match status" value="1"/>
</dbReference>
<dbReference type="HAMAP" id="MF_00318">
    <property type="entry name" value="Enolase"/>
    <property type="match status" value="1"/>
</dbReference>
<dbReference type="InterPro" id="IPR000941">
    <property type="entry name" value="Enolase"/>
</dbReference>
<dbReference type="InterPro" id="IPR036849">
    <property type="entry name" value="Enolase-like_C_sf"/>
</dbReference>
<dbReference type="InterPro" id="IPR029017">
    <property type="entry name" value="Enolase-like_N"/>
</dbReference>
<dbReference type="InterPro" id="IPR020810">
    <property type="entry name" value="Enolase_C"/>
</dbReference>
<dbReference type="InterPro" id="IPR020809">
    <property type="entry name" value="Enolase_CS"/>
</dbReference>
<dbReference type="InterPro" id="IPR020811">
    <property type="entry name" value="Enolase_N"/>
</dbReference>
<dbReference type="InterPro" id="IPR013342">
    <property type="entry name" value="Mandelate_racemase_C"/>
</dbReference>
<dbReference type="NCBIfam" id="TIGR01060">
    <property type="entry name" value="eno"/>
    <property type="match status" value="1"/>
</dbReference>
<dbReference type="PANTHER" id="PTHR11902">
    <property type="entry name" value="ENOLASE"/>
    <property type="match status" value="1"/>
</dbReference>
<dbReference type="PANTHER" id="PTHR11902:SF1">
    <property type="entry name" value="ENOLASE"/>
    <property type="match status" value="1"/>
</dbReference>
<dbReference type="Pfam" id="PF00113">
    <property type="entry name" value="Enolase_C"/>
    <property type="match status" value="1"/>
</dbReference>
<dbReference type="Pfam" id="PF03952">
    <property type="entry name" value="Enolase_N"/>
    <property type="match status" value="1"/>
</dbReference>
<dbReference type="PIRSF" id="PIRSF001400">
    <property type="entry name" value="Enolase"/>
    <property type="match status" value="1"/>
</dbReference>
<dbReference type="PRINTS" id="PR00148">
    <property type="entry name" value="ENOLASE"/>
</dbReference>
<dbReference type="SFLD" id="SFLDS00001">
    <property type="entry name" value="Enolase"/>
    <property type="match status" value="1"/>
</dbReference>
<dbReference type="SFLD" id="SFLDF00002">
    <property type="entry name" value="enolase"/>
    <property type="match status" value="1"/>
</dbReference>
<dbReference type="SMART" id="SM01192">
    <property type="entry name" value="Enolase_C"/>
    <property type="match status" value="1"/>
</dbReference>
<dbReference type="SMART" id="SM01193">
    <property type="entry name" value="Enolase_N"/>
    <property type="match status" value="1"/>
</dbReference>
<dbReference type="SMART" id="SM00922">
    <property type="entry name" value="MR_MLE"/>
    <property type="match status" value="1"/>
</dbReference>
<dbReference type="SUPFAM" id="SSF51604">
    <property type="entry name" value="Enolase C-terminal domain-like"/>
    <property type="match status" value="1"/>
</dbReference>
<dbReference type="SUPFAM" id="SSF54826">
    <property type="entry name" value="Enolase N-terminal domain-like"/>
    <property type="match status" value="1"/>
</dbReference>
<dbReference type="PROSITE" id="PS00164">
    <property type="entry name" value="ENOLASE"/>
    <property type="match status" value="1"/>
</dbReference>
<accession>A0LW71</accession>
<organism>
    <name type="scientific">Acidothermus cellulolyticus (strain ATCC 43068 / DSM 8971 / 11B)</name>
    <dbReference type="NCBI Taxonomy" id="351607"/>
    <lineage>
        <taxon>Bacteria</taxon>
        <taxon>Bacillati</taxon>
        <taxon>Actinomycetota</taxon>
        <taxon>Actinomycetes</taxon>
        <taxon>Acidothermales</taxon>
        <taxon>Acidothermaceae</taxon>
        <taxon>Acidothermus</taxon>
    </lineage>
</organism>
<sequence>MAVIEAIGAREILDSRGNPTVEVEVLLDDGTVGRAAVPSGASTGAFEAVEKRDGDDRYGGKGVRQAVQAVTDQIAPEIIGFDATEQRVLDARLIELDGTPNKSRLGANAILGVSMAVARAAADSADLPLFRYLGGPNAHLLPVPMMNILNGGAHADSNVDIQEFLIAPIGAATFAEALRYGVETYHALKAVLKGRGLATGLGDEGGFAPNLAHNREALDLILEAIGKAGFRPGRDIAVAIDAAATEFYRDGRYILEGQPRTAAELIRYYEELVASYPLVSLEDPLAEEDWDGWRELTAALGGTVQLVGDDIFVTNPERISRGIQTSVANAVLIKLNQIGTVTETLDAVELAHRAGYRTMISHRSGETEDTTIADVAVATNAGQIKTGAPARSERVAKYNQLLRIEEELDDAARYAGVAAFPRFAGGSAG</sequence>
<feature type="chain" id="PRO_0000280829" description="Enolase">
    <location>
        <begin position="1"/>
        <end position="429"/>
    </location>
</feature>
<feature type="active site" description="Proton donor" evidence="1">
    <location>
        <position position="204"/>
    </location>
</feature>
<feature type="active site" description="Proton acceptor" evidence="1">
    <location>
        <position position="334"/>
    </location>
</feature>
<feature type="binding site" evidence="1">
    <location>
        <position position="162"/>
    </location>
    <ligand>
        <name>(2R)-2-phosphoglycerate</name>
        <dbReference type="ChEBI" id="CHEBI:58289"/>
    </ligand>
</feature>
<feature type="binding site" evidence="1">
    <location>
        <position position="241"/>
    </location>
    <ligand>
        <name>Mg(2+)</name>
        <dbReference type="ChEBI" id="CHEBI:18420"/>
    </ligand>
</feature>
<feature type="binding site" evidence="1">
    <location>
        <position position="282"/>
    </location>
    <ligand>
        <name>Mg(2+)</name>
        <dbReference type="ChEBI" id="CHEBI:18420"/>
    </ligand>
</feature>
<feature type="binding site" evidence="1">
    <location>
        <position position="309"/>
    </location>
    <ligand>
        <name>Mg(2+)</name>
        <dbReference type="ChEBI" id="CHEBI:18420"/>
    </ligand>
</feature>
<feature type="binding site" evidence="1">
    <location>
        <position position="334"/>
    </location>
    <ligand>
        <name>(2R)-2-phosphoglycerate</name>
        <dbReference type="ChEBI" id="CHEBI:58289"/>
    </ligand>
</feature>
<feature type="binding site" evidence="1">
    <location>
        <position position="363"/>
    </location>
    <ligand>
        <name>(2R)-2-phosphoglycerate</name>
        <dbReference type="ChEBI" id="CHEBI:58289"/>
    </ligand>
</feature>
<feature type="binding site" evidence="1">
    <location>
        <position position="364"/>
    </location>
    <ligand>
        <name>(2R)-2-phosphoglycerate</name>
        <dbReference type="ChEBI" id="CHEBI:58289"/>
    </ligand>
</feature>
<feature type="binding site" evidence="1">
    <location>
        <position position="385"/>
    </location>
    <ligand>
        <name>(2R)-2-phosphoglycerate</name>
        <dbReference type="ChEBI" id="CHEBI:58289"/>
    </ligand>
</feature>
<proteinExistence type="inferred from homology"/>